<proteinExistence type="evidence at transcript level"/>
<dbReference type="EC" id="1.14.13.39" evidence="2"/>
<dbReference type="EMBL" id="AMGL01039383">
    <property type="status" value="NOT_ANNOTATED_CDS"/>
    <property type="molecule type" value="Genomic_DNA"/>
</dbReference>
<dbReference type="EMBL" id="AMGL01039384">
    <property type="status" value="NOT_ANNOTATED_CDS"/>
    <property type="molecule type" value="Genomic_DNA"/>
</dbReference>
<dbReference type="EMBL" id="X99042">
    <property type="protein sequence ID" value="CAA67503.1"/>
    <property type="molecule type" value="Genomic_DNA"/>
</dbReference>
<dbReference type="EMBL" id="U76739">
    <property type="protein sequence ID" value="AAB40706.1"/>
    <property type="molecule type" value="mRNA"/>
</dbReference>
<dbReference type="SMR" id="Q29498"/>
<dbReference type="STRING" id="9940.ENSOARP00000004517"/>
<dbReference type="PaxDb" id="9940-ENSOARP00000004517"/>
<dbReference type="eggNOG" id="KOG1158">
    <property type="taxonomic scope" value="Eukaryota"/>
</dbReference>
<dbReference type="OMA" id="MQLPTHG"/>
<dbReference type="Proteomes" id="UP000002356">
    <property type="component" value="Chromosome 17"/>
</dbReference>
<dbReference type="Bgee" id="ENSOARG00000004210">
    <property type="expression patterns" value="Expressed in major salivary gland and 26 other cell types or tissues"/>
</dbReference>
<dbReference type="GO" id="GO:0043197">
    <property type="term" value="C:dendritic spine"/>
    <property type="evidence" value="ECO:0007669"/>
    <property type="project" value="UniProtKB-SubCell"/>
</dbReference>
<dbReference type="GO" id="GO:0042383">
    <property type="term" value="C:sarcolemma"/>
    <property type="evidence" value="ECO:0007669"/>
    <property type="project" value="UniProtKB-SubCell"/>
</dbReference>
<dbReference type="GO" id="GO:0005516">
    <property type="term" value="F:calmodulin binding"/>
    <property type="evidence" value="ECO:0007669"/>
    <property type="project" value="UniProtKB-KW"/>
</dbReference>
<dbReference type="GO" id="GO:0050660">
    <property type="term" value="F:flavin adenine dinucleotide binding"/>
    <property type="evidence" value="ECO:0007669"/>
    <property type="project" value="InterPro"/>
</dbReference>
<dbReference type="GO" id="GO:0010181">
    <property type="term" value="F:FMN binding"/>
    <property type="evidence" value="ECO:0007669"/>
    <property type="project" value="InterPro"/>
</dbReference>
<dbReference type="GO" id="GO:0020037">
    <property type="term" value="F:heme binding"/>
    <property type="evidence" value="ECO:0007669"/>
    <property type="project" value="InterPro"/>
</dbReference>
<dbReference type="GO" id="GO:0046872">
    <property type="term" value="F:metal ion binding"/>
    <property type="evidence" value="ECO:0007669"/>
    <property type="project" value="UniProtKB-KW"/>
</dbReference>
<dbReference type="GO" id="GO:0050661">
    <property type="term" value="F:NADP binding"/>
    <property type="evidence" value="ECO:0007669"/>
    <property type="project" value="InterPro"/>
</dbReference>
<dbReference type="GO" id="GO:0004517">
    <property type="term" value="F:nitric-oxide synthase activity"/>
    <property type="evidence" value="ECO:0000250"/>
    <property type="project" value="UniProtKB"/>
</dbReference>
<dbReference type="GO" id="GO:0006809">
    <property type="term" value="P:nitric oxide biosynthetic process"/>
    <property type="evidence" value="ECO:0007669"/>
    <property type="project" value="InterPro"/>
</dbReference>
<dbReference type="CDD" id="cd06202">
    <property type="entry name" value="Nitric_oxide_synthase"/>
    <property type="match status" value="1"/>
</dbReference>
<dbReference type="CDD" id="cd00795">
    <property type="entry name" value="NOS_oxygenase_euk"/>
    <property type="match status" value="1"/>
</dbReference>
<dbReference type="CDD" id="cd06708">
    <property type="entry name" value="PDZ_nNOS-like"/>
    <property type="match status" value="1"/>
</dbReference>
<dbReference type="FunFam" id="3.90.440.10:FF:000001">
    <property type="entry name" value="Endothelial nitric oxide synthase"/>
    <property type="match status" value="1"/>
</dbReference>
<dbReference type="FunFam" id="1.20.990.10:FF:000002">
    <property type="entry name" value="Nitric oxide synthase"/>
    <property type="match status" value="1"/>
</dbReference>
<dbReference type="FunFam" id="2.30.42.10:FF:000069">
    <property type="entry name" value="Nitric oxide synthase"/>
    <property type="match status" value="1"/>
</dbReference>
<dbReference type="FunFam" id="3.40.50.80:FF:000003">
    <property type="entry name" value="Nitric oxide synthase"/>
    <property type="match status" value="1"/>
</dbReference>
<dbReference type="FunFam" id="3.90.1230.10:FF:000001">
    <property type="entry name" value="Nitric oxide synthase, brain"/>
    <property type="match status" value="1"/>
</dbReference>
<dbReference type="Gene3D" id="2.30.42.10">
    <property type="match status" value="1"/>
</dbReference>
<dbReference type="Gene3D" id="3.40.50.360">
    <property type="match status" value="1"/>
</dbReference>
<dbReference type="Gene3D" id="1.20.990.10">
    <property type="entry name" value="NADPH-cytochrome p450 Reductase, Chain A, domain 3"/>
    <property type="match status" value="1"/>
</dbReference>
<dbReference type="Gene3D" id="3.90.340.10">
    <property type="entry name" value="Nitric Oxide Synthase, Chain A, domain 1"/>
    <property type="match status" value="1"/>
</dbReference>
<dbReference type="Gene3D" id="3.90.1230.10">
    <property type="entry name" value="Nitric Oxide Synthase, Chain A, domain 3"/>
    <property type="match status" value="1"/>
</dbReference>
<dbReference type="Gene3D" id="3.90.440.10">
    <property type="entry name" value="Nitric Oxide Synthase,Heme Domain,Chain A domain 2"/>
    <property type="match status" value="1"/>
</dbReference>
<dbReference type="Gene3D" id="3.40.50.80">
    <property type="entry name" value="Nucleotide-binding domain of ferredoxin-NADP reductase (FNR) module"/>
    <property type="match status" value="1"/>
</dbReference>
<dbReference type="Gene3D" id="2.40.30.10">
    <property type="entry name" value="Translation factors"/>
    <property type="match status" value="1"/>
</dbReference>
<dbReference type="InterPro" id="IPR003097">
    <property type="entry name" value="CysJ-like_FAD-binding"/>
</dbReference>
<dbReference type="InterPro" id="IPR017927">
    <property type="entry name" value="FAD-bd_FR_type"/>
</dbReference>
<dbReference type="InterPro" id="IPR001094">
    <property type="entry name" value="Flavdoxin-like"/>
</dbReference>
<dbReference type="InterPro" id="IPR008254">
    <property type="entry name" value="Flavodoxin/NO_synth"/>
</dbReference>
<dbReference type="InterPro" id="IPR001709">
    <property type="entry name" value="Flavoprot_Pyr_Nucl_cyt_Rdtase"/>
</dbReference>
<dbReference type="InterPro" id="IPR029039">
    <property type="entry name" value="Flavoprotein-like_sf"/>
</dbReference>
<dbReference type="InterPro" id="IPR039261">
    <property type="entry name" value="FNR_nucleotide-bd"/>
</dbReference>
<dbReference type="InterPro" id="IPR023173">
    <property type="entry name" value="NADPH_Cyt_P450_Rdtase_alpha"/>
</dbReference>
<dbReference type="InterPro" id="IPR050607">
    <property type="entry name" value="NOS"/>
</dbReference>
<dbReference type="InterPro" id="IPR044943">
    <property type="entry name" value="NOS_dom_1"/>
</dbReference>
<dbReference type="InterPro" id="IPR044940">
    <property type="entry name" value="NOS_dom_2"/>
</dbReference>
<dbReference type="InterPro" id="IPR044944">
    <property type="entry name" value="NOS_dom_3"/>
</dbReference>
<dbReference type="InterPro" id="IPR012144">
    <property type="entry name" value="NOS_euk"/>
</dbReference>
<dbReference type="InterPro" id="IPR004030">
    <property type="entry name" value="NOS_N"/>
</dbReference>
<dbReference type="InterPro" id="IPR036119">
    <property type="entry name" value="NOS_N_sf"/>
</dbReference>
<dbReference type="InterPro" id="IPR001433">
    <property type="entry name" value="OxRdtase_FAD/NAD-bd"/>
</dbReference>
<dbReference type="InterPro" id="IPR001478">
    <property type="entry name" value="PDZ"/>
</dbReference>
<dbReference type="InterPro" id="IPR036034">
    <property type="entry name" value="PDZ_sf"/>
</dbReference>
<dbReference type="InterPro" id="IPR017938">
    <property type="entry name" value="Riboflavin_synthase-like_b-brl"/>
</dbReference>
<dbReference type="PANTHER" id="PTHR43410:SF2">
    <property type="entry name" value="NITRIC OXIDE SYNTHASE"/>
    <property type="match status" value="1"/>
</dbReference>
<dbReference type="PANTHER" id="PTHR43410">
    <property type="entry name" value="NITRIC OXIDE SYNTHASE OXYGENASE"/>
    <property type="match status" value="1"/>
</dbReference>
<dbReference type="Pfam" id="PF00667">
    <property type="entry name" value="FAD_binding_1"/>
    <property type="match status" value="1"/>
</dbReference>
<dbReference type="Pfam" id="PF00258">
    <property type="entry name" value="Flavodoxin_1"/>
    <property type="match status" value="1"/>
</dbReference>
<dbReference type="Pfam" id="PF00175">
    <property type="entry name" value="NAD_binding_1"/>
    <property type="match status" value="1"/>
</dbReference>
<dbReference type="Pfam" id="PF02898">
    <property type="entry name" value="NO_synthase"/>
    <property type="match status" value="1"/>
</dbReference>
<dbReference type="Pfam" id="PF00595">
    <property type="entry name" value="PDZ"/>
    <property type="match status" value="1"/>
</dbReference>
<dbReference type="PIRSF" id="PIRSF000333">
    <property type="entry name" value="NOS"/>
    <property type="match status" value="1"/>
</dbReference>
<dbReference type="PRINTS" id="PR00369">
    <property type="entry name" value="FLAVODOXIN"/>
</dbReference>
<dbReference type="PRINTS" id="PR00371">
    <property type="entry name" value="FPNCR"/>
</dbReference>
<dbReference type="SMART" id="SM00228">
    <property type="entry name" value="PDZ"/>
    <property type="match status" value="1"/>
</dbReference>
<dbReference type="SUPFAM" id="SSF52343">
    <property type="entry name" value="Ferredoxin reductase-like, C-terminal NADP-linked domain"/>
    <property type="match status" value="1"/>
</dbReference>
<dbReference type="SUPFAM" id="SSF52218">
    <property type="entry name" value="Flavoproteins"/>
    <property type="match status" value="1"/>
</dbReference>
<dbReference type="SUPFAM" id="SSF56512">
    <property type="entry name" value="Nitric oxide (NO) synthase oxygenase domain"/>
    <property type="match status" value="1"/>
</dbReference>
<dbReference type="SUPFAM" id="SSF50156">
    <property type="entry name" value="PDZ domain-like"/>
    <property type="match status" value="1"/>
</dbReference>
<dbReference type="SUPFAM" id="SSF63380">
    <property type="entry name" value="Riboflavin synthase domain-like"/>
    <property type="match status" value="1"/>
</dbReference>
<dbReference type="PROSITE" id="PS51384">
    <property type="entry name" value="FAD_FR"/>
    <property type="match status" value="1"/>
</dbReference>
<dbReference type="PROSITE" id="PS50902">
    <property type="entry name" value="FLAVODOXIN_LIKE"/>
    <property type="match status" value="1"/>
</dbReference>
<dbReference type="PROSITE" id="PS60001">
    <property type="entry name" value="NOS"/>
    <property type="match status" value="1"/>
</dbReference>
<dbReference type="PROSITE" id="PS50106">
    <property type="entry name" value="PDZ"/>
    <property type="match status" value="1"/>
</dbReference>
<reference key="1">
    <citation type="journal article" date="2010" name="Anim. Genet.">
        <title>The sheep genome reference sequence: a work in progress.</title>
        <authorList>
            <person name="Archibald A.L."/>
            <person name="Cockett N.E."/>
            <person name="Dalrymple B.P."/>
            <person name="Faraut T."/>
            <person name="Kijas J.W."/>
            <person name="Maddox J.F."/>
            <person name="McEwan J.C."/>
            <person name="Hutton Oddy V."/>
            <person name="Raadsma H.W."/>
            <person name="Wade C."/>
            <person name="Wang J."/>
            <person name="Wang W."/>
            <person name="Xun X."/>
        </authorList>
    </citation>
    <scope>NUCLEOTIDE SEQUENCE [LARGE SCALE GENOMIC DNA]</scope>
    <source>
        <strain>Texel</strain>
    </source>
</reference>
<reference key="2">
    <citation type="submission" date="1996-07" db="EMBL/GenBank/DDBJ databases">
        <authorList>
            <person name="Mimmack M.L."/>
        </authorList>
    </citation>
    <scope>NUCLEOTIDE SEQUENCE [GENOMIC DNA] OF 49-121</scope>
</reference>
<reference key="3">
    <citation type="submission" date="1996-10" db="EMBL/GenBank/DDBJ databases">
        <title>Effect of hypoxia on the expression pattern of neuronal nitric oxide synthase gene in the sheep fetal brain microvasculature.</title>
        <authorList>
            <person name="Aguan K."/>
            <person name="Weiner C.P."/>
        </authorList>
    </citation>
    <scope>NUCLEOTIDE SEQUENCE [MRNA] OF 1020-1132</scope>
    <source>
        <tissue>Neuron</tissue>
    </source>
</reference>
<organism>
    <name type="scientific">Ovis aries</name>
    <name type="common">Sheep</name>
    <dbReference type="NCBI Taxonomy" id="9940"/>
    <lineage>
        <taxon>Eukaryota</taxon>
        <taxon>Metazoa</taxon>
        <taxon>Chordata</taxon>
        <taxon>Craniata</taxon>
        <taxon>Vertebrata</taxon>
        <taxon>Euteleostomi</taxon>
        <taxon>Mammalia</taxon>
        <taxon>Eutheria</taxon>
        <taxon>Laurasiatheria</taxon>
        <taxon>Artiodactyla</taxon>
        <taxon>Ruminantia</taxon>
        <taxon>Pecora</taxon>
        <taxon>Bovidae</taxon>
        <taxon>Caprinae</taxon>
        <taxon>Ovis</taxon>
    </lineage>
</organism>
<keyword id="KW-0112">Calmodulin-binding</keyword>
<keyword id="KW-1003">Cell membrane</keyword>
<keyword id="KW-0966">Cell projection</keyword>
<keyword id="KW-0274">FAD</keyword>
<keyword id="KW-0285">Flavoprotein</keyword>
<keyword id="KW-0288">FMN</keyword>
<keyword id="KW-0349">Heme</keyword>
<keyword id="KW-0408">Iron</keyword>
<keyword id="KW-0472">Membrane</keyword>
<keyword id="KW-0479">Metal-binding</keyword>
<keyword id="KW-0521">NADP</keyword>
<keyword id="KW-0560">Oxidoreductase</keyword>
<keyword id="KW-0597">Phosphoprotein</keyword>
<keyword id="KW-1185">Reference proteome</keyword>
<keyword id="KW-0770">Synapse</keyword>
<keyword id="KW-0832">Ubl conjugation</keyword>
<comment type="function">
    <text evidence="2">Produces nitric oxide (NO) which is a messenger molecule with diverse functions throughout the body. In the brain and peripheral nervous system, NO displays many properties of a neurotransmitter. Probably has nitrosylase activity and mediates cysteine S-nitrosylation of cytoplasmic target proteins such SRR (By similarity).</text>
</comment>
<comment type="catalytic activity">
    <reaction evidence="2">
        <text>2 L-arginine + 3 NADPH + 4 O2 + H(+) = 2 L-citrulline + 2 nitric oxide + 3 NADP(+) + 4 H2O</text>
        <dbReference type="Rhea" id="RHEA:19897"/>
        <dbReference type="ChEBI" id="CHEBI:15377"/>
        <dbReference type="ChEBI" id="CHEBI:15378"/>
        <dbReference type="ChEBI" id="CHEBI:15379"/>
        <dbReference type="ChEBI" id="CHEBI:16480"/>
        <dbReference type="ChEBI" id="CHEBI:32682"/>
        <dbReference type="ChEBI" id="CHEBI:57743"/>
        <dbReference type="ChEBI" id="CHEBI:57783"/>
        <dbReference type="ChEBI" id="CHEBI:58349"/>
        <dbReference type="EC" id="1.14.13.39"/>
    </reaction>
    <physiologicalReaction direction="left-to-right" evidence="2">
        <dbReference type="Rhea" id="RHEA:19898"/>
    </physiologicalReaction>
</comment>
<comment type="cofactor">
    <cofactor evidence="1">
        <name>heme b</name>
        <dbReference type="ChEBI" id="CHEBI:60344"/>
    </cofactor>
</comment>
<comment type="cofactor">
    <cofactor evidence="2">
        <name>FAD</name>
        <dbReference type="ChEBI" id="CHEBI:57692"/>
    </cofactor>
    <text evidence="2">Binds 1 FAD.</text>
</comment>
<comment type="cofactor">
    <cofactor evidence="2">
        <name>FMN</name>
        <dbReference type="ChEBI" id="CHEBI:58210"/>
    </cofactor>
    <text evidence="2">Binds 1 FMN.</text>
</comment>
<comment type="cofactor">
    <cofactor evidence="1">
        <name>(6R)-L-erythro-5,6,7,8-tetrahydrobiopterin</name>
        <dbReference type="ChEBI" id="CHEBI:59560"/>
    </cofactor>
    <text evidence="1">Tetrahydrobiopterin (BH4). May stabilize the dimeric form of the enzyme.</text>
</comment>
<comment type="activity regulation">
    <text evidence="2">Stimulated by calcium/calmodulin. Inhibited by DYNLL1 that prevents the dimerization of the protein. Inhibited by NOSIP.</text>
</comment>
<comment type="subunit">
    <text evidence="2 3">Homodimer. Interacts with DLG4; the interaction possibly being prevented by the association between NOS1 and CAPON. Forms a ternary complex with CAPON and RASD1. Forms a ternary complex with CAPON and SYN1. Interacts with ZDHHC23. Interacts with NOSIP; which may impair its synaptic location (By similarity). Interacts with HTR4 (By similarity). Interacts with SLC6A4. Interacts with VAC14 (By similarity). Interacts (via N-terminal domain) with DLG4 (via N-terminal tandem pair of PDZ domains). Interacts with SLC6A4. Forms a complex with ASL, ASS1 and SLC7A1; the complex regulates cell-autonomous L-arginine synthesis and citrulline recycling while channeling extracellular L-arginine to nitric oxide synthesis pathway (By similarity). Interacts with DMD; localizes NOS1 to sarcolemma in muscle cells (By similarity). Interacts with DYNLL1; inhibits the nitric oxide synthase activity (By similarity).</text>
</comment>
<comment type="subcellular location">
    <subcellularLocation>
        <location evidence="3">Cell membrane</location>
        <location evidence="3">Sarcolemma</location>
        <topology evidence="4">Peripheral membrane protein</topology>
    </subcellularLocation>
    <subcellularLocation>
        <location evidence="2">Cell projection</location>
        <location evidence="2">Dendritic spine</location>
    </subcellularLocation>
    <text evidence="2 3">In skeletal muscle, it is localized beneath the sarcolemma of fast-twitch muscle fiber by associating with the dystrophin glycoprotein complex (By similarity). In neurons, enriched in dendritic spines (By similarity).</text>
</comment>
<comment type="domain">
    <text evidence="2">The PDZ domain participates in protein-protein interaction, and is responsible for targeting nNos to synaptic membranes. Mediates interaction with VAC14.</text>
</comment>
<comment type="PTM">
    <text evidence="2">Ubiquitinated; mediated by STUB1/CHIP in the presence of Hsp70 and Hsp40 (in vitro).</text>
</comment>
<comment type="similarity">
    <text evidence="9">Belongs to the NOS family.</text>
</comment>
<evidence type="ECO:0000250" key="1">
    <source>
        <dbReference type="UniProtKB" id="P29475"/>
    </source>
</evidence>
<evidence type="ECO:0000250" key="2">
    <source>
        <dbReference type="UniProtKB" id="P29476"/>
    </source>
</evidence>
<evidence type="ECO:0000250" key="3">
    <source>
        <dbReference type="UniProtKB" id="Q9Z0J4"/>
    </source>
</evidence>
<evidence type="ECO:0000255" key="4"/>
<evidence type="ECO:0000255" key="5">
    <source>
        <dbReference type="PROSITE-ProRule" id="PRU00088"/>
    </source>
</evidence>
<evidence type="ECO:0000255" key="6">
    <source>
        <dbReference type="PROSITE-ProRule" id="PRU00143"/>
    </source>
</evidence>
<evidence type="ECO:0000255" key="7">
    <source>
        <dbReference type="PROSITE-ProRule" id="PRU00716"/>
    </source>
</evidence>
<evidence type="ECO:0000256" key="8">
    <source>
        <dbReference type="SAM" id="MobiDB-lite"/>
    </source>
</evidence>
<evidence type="ECO:0000305" key="9"/>
<accession>Q29498</accession>
<accession>P79210</accession>
<accession>W5P268</accession>
<feature type="chain" id="PRO_0000170925" description="Nitric oxide synthase 1">
    <location>
        <begin position="1"/>
        <end position="1463"/>
    </location>
</feature>
<feature type="domain" description="PDZ" evidence="6">
    <location>
        <begin position="17"/>
        <end position="99"/>
    </location>
</feature>
<feature type="domain" description="Flavodoxin-like" evidence="5">
    <location>
        <begin position="755"/>
        <end position="969"/>
    </location>
</feature>
<feature type="domain" description="FAD-binding FR-type" evidence="7">
    <location>
        <begin position="1024"/>
        <end position="1271"/>
    </location>
</feature>
<feature type="region of interest" description="Interaction with NOSIP" evidence="2">
    <location>
        <begin position="1"/>
        <end position="200"/>
    </location>
</feature>
<feature type="region of interest" description="Disordered" evidence="8">
    <location>
        <begin position="110"/>
        <end position="194"/>
    </location>
</feature>
<feature type="region of interest" description="DYNLL1/PIN/nNOS-inhibiting protein-binding" evidence="2">
    <location>
        <begin position="158"/>
        <end position="240"/>
    </location>
</feature>
<feature type="region of interest" description="Disordered" evidence="8">
    <location>
        <begin position="215"/>
        <end position="250"/>
    </location>
</feature>
<feature type="region of interest" description="Disordered" evidence="8">
    <location>
        <begin position="268"/>
        <end position="298"/>
    </location>
</feature>
<feature type="region of interest" description="Calmodulin-binding" evidence="2">
    <location>
        <begin position="725"/>
        <end position="745"/>
    </location>
</feature>
<feature type="compositionally biased region" description="Basic and acidic residues" evidence="8">
    <location>
        <begin position="226"/>
        <end position="243"/>
    </location>
</feature>
<feature type="compositionally biased region" description="Polar residues" evidence="8">
    <location>
        <begin position="280"/>
        <end position="294"/>
    </location>
</feature>
<feature type="binding site" evidence="1">
    <location>
        <position position="334"/>
    </location>
    <ligand>
        <name>(6R)-L-erythro-5,6,7,8-tetrahydrobiopterin</name>
        <dbReference type="ChEBI" id="CHEBI:59560"/>
    </ligand>
</feature>
<feature type="binding site" description="axial binding residue" evidence="1">
    <location>
        <position position="415"/>
    </location>
    <ligand>
        <name>heme b</name>
        <dbReference type="ChEBI" id="CHEBI:60344"/>
    </ligand>
    <ligandPart>
        <name>Fe</name>
        <dbReference type="ChEBI" id="CHEBI:18248"/>
    </ligandPart>
</feature>
<feature type="binding site" evidence="1">
    <location>
        <position position="478"/>
    </location>
    <ligand>
        <name>L-arginine</name>
        <dbReference type="ChEBI" id="CHEBI:32682"/>
    </ligand>
</feature>
<feature type="binding site" evidence="1">
    <location>
        <position position="587"/>
    </location>
    <ligand>
        <name>L-arginine</name>
        <dbReference type="ChEBI" id="CHEBI:32682"/>
    </ligand>
</feature>
<feature type="binding site" evidence="1">
    <location>
        <position position="588"/>
    </location>
    <ligand>
        <name>L-arginine</name>
        <dbReference type="ChEBI" id="CHEBI:32682"/>
    </ligand>
</feature>
<feature type="binding site" evidence="1">
    <location>
        <position position="592"/>
    </location>
    <ligand>
        <name>L-arginine</name>
        <dbReference type="ChEBI" id="CHEBI:32682"/>
    </ligand>
</feature>
<feature type="binding site" evidence="1">
    <location>
        <position position="677"/>
    </location>
    <ligand>
        <name>(6R)-L-erythro-5,6,7,8-tetrahydrobiopterin</name>
        <dbReference type="ChEBI" id="CHEBI:59560"/>
    </ligand>
</feature>
<feature type="binding site" evidence="1">
    <location>
        <position position="678"/>
    </location>
    <ligand>
        <name>(6R)-L-erythro-5,6,7,8-tetrahydrobiopterin</name>
        <dbReference type="ChEBI" id="CHEBI:59560"/>
    </ligand>
</feature>
<feature type="binding site" evidence="1">
    <location>
        <position position="691"/>
    </location>
    <ligand>
        <name>(6R)-L-erythro-5,6,7,8-tetrahydrobiopterin</name>
        <dbReference type="ChEBI" id="CHEBI:59560"/>
    </ligand>
</feature>
<feature type="binding site" evidence="1">
    <location>
        <position position="706"/>
    </location>
    <ligand>
        <name>heme b</name>
        <dbReference type="ChEBI" id="CHEBI:60344"/>
    </ligand>
</feature>
<feature type="binding site" evidence="2">
    <location>
        <position position="761"/>
    </location>
    <ligand>
        <name>FMN</name>
        <dbReference type="ChEBI" id="CHEBI:58210"/>
    </ligand>
</feature>
<feature type="binding site" evidence="2">
    <location>
        <position position="762"/>
    </location>
    <ligand>
        <name>FMN</name>
        <dbReference type="ChEBI" id="CHEBI:58210"/>
    </ligand>
</feature>
<feature type="binding site" evidence="2">
    <location>
        <position position="763"/>
    </location>
    <ligand>
        <name>FMN</name>
        <dbReference type="ChEBI" id="CHEBI:58210"/>
    </ligand>
</feature>
<feature type="binding site" evidence="2">
    <location>
        <position position="765"/>
    </location>
    <ligand>
        <name>FMN</name>
        <dbReference type="ChEBI" id="CHEBI:58210"/>
    </ligand>
</feature>
<feature type="binding site" evidence="2">
    <location>
        <position position="766"/>
    </location>
    <ligand>
        <name>FMN</name>
        <dbReference type="ChEBI" id="CHEBI:58210"/>
    </ligand>
</feature>
<feature type="binding site" evidence="2">
    <location>
        <position position="807"/>
    </location>
    <ligand>
        <name>FMN</name>
        <dbReference type="ChEBI" id="CHEBI:58210"/>
    </ligand>
</feature>
<feature type="binding site" evidence="2">
    <location>
        <position position="808"/>
    </location>
    <ligand>
        <name>FMN</name>
        <dbReference type="ChEBI" id="CHEBI:58210"/>
    </ligand>
</feature>
<feature type="binding site" evidence="2">
    <location>
        <position position="812"/>
    </location>
    <ligand>
        <name>FMN</name>
        <dbReference type="ChEBI" id="CHEBI:58210"/>
    </ligand>
</feature>
<feature type="binding site" evidence="2">
    <location>
        <position position="920"/>
    </location>
    <ligand>
        <name>FMN</name>
        <dbReference type="ChEBI" id="CHEBI:58210"/>
    </ligand>
</feature>
<feature type="binding site" evidence="2">
    <location>
        <position position="925"/>
    </location>
    <ligand>
        <name>FMN</name>
        <dbReference type="ChEBI" id="CHEBI:58210"/>
    </ligand>
</feature>
<feature type="binding site" evidence="2">
    <location>
        <position position="927"/>
    </location>
    <ligand>
        <name>FMN</name>
        <dbReference type="ChEBI" id="CHEBI:58210"/>
    </ligand>
</feature>
<feature type="binding site" evidence="2">
    <location>
        <position position="953"/>
    </location>
    <ligand>
        <name>FMN</name>
        <dbReference type="ChEBI" id="CHEBI:58210"/>
    </ligand>
</feature>
<feature type="binding site" evidence="2">
    <location>
        <position position="957"/>
    </location>
    <ligand>
        <name>FMN</name>
        <dbReference type="ChEBI" id="CHEBI:58210"/>
    </ligand>
</feature>
<feature type="binding site" evidence="2">
    <location>
        <position position="1044"/>
    </location>
    <ligand>
        <name>NADP(+)</name>
        <dbReference type="ChEBI" id="CHEBI:58349"/>
    </ligand>
</feature>
<feature type="binding site" evidence="2">
    <location>
        <position position="1066"/>
    </location>
    <ligand>
        <name>FAD</name>
        <dbReference type="ChEBI" id="CHEBI:57692"/>
    </ligand>
</feature>
<feature type="binding site" evidence="2">
    <location>
        <position position="1207"/>
    </location>
    <ligand>
        <name>FAD</name>
        <dbReference type="ChEBI" id="CHEBI:57692"/>
    </ligand>
</feature>
<feature type="binding site" evidence="2">
    <location>
        <position position="1208"/>
    </location>
    <ligand>
        <name>FAD</name>
        <dbReference type="ChEBI" id="CHEBI:57692"/>
    </ligand>
</feature>
<feature type="binding site" evidence="2">
    <location>
        <position position="1209"/>
    </location>
    <ligand>
        <name>FAD</name>
        <dbReference type="ChEBI" id="CHEBI:57692"/>
    </ligand>
</feature>
<feature type="binding site" evidence="2">
    <location>
        <position position="1210"/>
    </location>
    <ligand>
        <name>FAD</name>
        <dbReference type="ChEBI" id="CHEBI:57692"/>
    </ligand>
</feature>
<feature type="binding site" evidence="2">
    <location>
        <position position="1225"/>
    </location>
    <ligand>
        <name>FAD</name>
        <dbReference type="ChEBI" id="CHEBI:57692"/>
    </ligand>
</feature>
<feature type="binding site" evidence="2">
    <location>
        <position position="1227"/>
    </location>
    <ligand>
        <name>FAD</name>
        <dbReference type="ChEBI" id="CHEBI:57692"/>
    </ligand>
</feature>
<feature type="binding site" evidence="2">
    <location>
        <position position="1230"/>
    </location>
    <ligand>
        <name>NADP(+)</name>
        <dbReference type="ChEBI" id="CHEBI:58349"/>
    </ligand>
</feature>
<feature type="binding site" evidence="2">
    <location>
        <position position="1231"/>
    </location>
    <ligand>
        <name>FAD</name>
        <dbReference type="ChEBI" id="CHEBI:57692"/>
    </ligand>
</feature>
<feature type="binding site" evidence="2">
    <location>
        <position position="1244"/>
    </location>
    <ligand>
        <name>FAD</name>
        <dbReference type="ChEBI" id="CHEBI:57692"/>
    </ligand>
</feature>
<feature type="binding site" evidence="2">
    <location>
        <position position="1245"/>
    </location>
    <ligand>
        <name>FAD</name>
        <dbReference type="ChEBI" id="CHEBI:57692"/>
    </ligand>
</feature>
<feature type="binding site" evidence="2">
    <location>
        <position position="1246"/>
    </location>
    <ligand>
        <name>FAD</name>
        <dbReference type="ChEBI" id="CHEBI:57692"/>
    </ligand>
</feature>
<feature type="binding site" evidence="2">
    <location>
        <position position="1285"/>
    </location>
    <ligand>
        <name>NADP(+)</name>
        <dbReference type="ChEBI" id="CHEBI:58349"/>
    </ligand>
</feature>
<feature type="binding site" evidence="2">
    <location>
        <position position="1318"/>
    </location>
    <ligand>
        <name>NADP(+)</name>
        <dbReference type="ChEBI" id="CHEBI:58349"/>
    </ligand>
</feature>
<feature type="binding site" evidence="2">
    <location>
        <position position="1347"/>
    </location>
    <ligand>
        <name>NADP(+)</name>
        <dbReference type="ChEBI" id="CHEBI:58349"/>
    </ligand>
</feature>
<feature type="binding site" evidence="2">
    <location>
        <position position="1348"/>
    </location>
    <ligand>
        <name>NADP(+)</name>
        <dbReference type="ChEBI" id="CHEBI:58349"/>
    </ligand>
</feature>
<feature type="binding site" evidence="2">
    <location>
        <position position="1354"/>
    </location>
    <ligand>
        <name>NADP(+)</name>
        <dbReference type="ChEBI" id="CHEBI:58349"/>
    </ligand>
</feature>
<feature type="binding site" evidence="2">
    <location>
        <position position="1356"/>
    </location>
    <ligand>
        <name>NADP(+)</name>
        <dbReference type="ChEBI" id="CHEBI:58349"/>
    </ligand>
</feature>
<feature type="binding site" evidence="2">
    <location>
        <position position="1358"/>
    </location>
    <ligand>
        <name>NADP(+)</name>
        <dbReference type="ChEBI" id="CHEBI:58349"/>
    </ligand>
</feature>
<feature type="binding site" evidence="2">
    <location>
        <position position="1391"/>
    </location>
    <ligand>
        <name>NADP(+)</name>
        <dbReference type="ChEBI" id="CHEBI:58349"/>
    </ligand>
</feature>
<feature type="binding site" evidence="2">
    <location>
        <position position="1432"/>
    </location>
    <ligand>
        <name>NADP(+)</name>
        <dbReference type="ChEBI" id="CHEBI:58349"/>
    </ligand>
</feature>
<feature type="binding site" evidence="2">
    <location>
        <position position="1434"/>
    </location>
    <ligand>
        <name>NADP(+)</name>
        <dbReference type="ChEBI" id="CHEBI:58349"/>
    </ligand>
</feature>
<feature type="modified residue" description="Phosphoserine" evidence="2">
    <location>
        <position position="881"/>
    </location>
</feature>
<feature type="modified residue" description="Phosphoserine" evidence="3">
    <location>
        <position position="891"/>
    </location>
</feature>
<feature type="modified residue" description="Phosphoserine" evidence="2">
    <location>
        <position position="892"/>
    </location>
</feature>
<feature type="sequence conflict" description="In Ref. 2; CAA67503." evidence="9" ref="2">
    <original>L</original>
    <variation>F</variation>
    <location>
        <position position="84"/>
    </location>
</feature>
<feature type="sequence conflict" description="In Ref. 2; CAA67503." evidence="9" ref="2">
    <original>R</original>
    <variation>H</variation>
    <location>
        <position position="121"/>
    </location>
</feature>
<sequence>MESHMFSVQQIQPNVISVRLFKRKVGGLGFLVKERVSKPPVIISDLIRGGAAEQSGLIQAGDIILAVNGQPLVDLSYDSALEVLRGIASETHVVLILRGPEGFTTHLETTFTGDGTPKTIRVTRPGRVTPPPDAPAGREQPRAVDGAPGPGNGPQHAPDPGQEASSLAQANGLAARPPGQDPAKKSTGVALQGSGENNKLLKEIEPVLNLLTSGGKAINGGGPAKTETKDVEVQVDRDPDSKSHKPLPLGVENDRVFNDLWGKGNMPVVLNNPYSEKEQPSASGKQSPTKNGSPSKCPRFLKVKNWETDVVLSDTLHLKSTLGTGCTEHICMGSVMLPSQQIRKPEDVRTKEQLFPLAKEFIDQYYSSIKRFGSKAHMERLEEVNKEIETTSTYQLKDTELIYGAKHAWRNASRCVGRIQWSKLQVFDARDCTTAHGMFNYICNHIKYATNKGNLRSAITIFPQRTDGKHDFRVWNSQLIRYAGYKQPDGSILGDPANVEFTEICIQQGWKPPRSRFDVLPLLLQANGNDPELFQIPPELVLEVPIRHPKFEWFKDLGLKWYGLPAVSNMLLEIGGLEFSACPFSGWYMGTEIGVRDYCDSSRYNILEDVAKKMNLDMRKTSSLWKDQALVEINIAVLYSFQSDKVTIVDHHSATESFIKHMENEYRCRGGCPADWVWIVPPMSGSITPVFHQEMLNYRLTPSFEYQPDPWNTHVWKGTNGTPTKRRAIGFKKLAEAVKFSAKLMGQAMAKRVKATILYATETGKSQAYAKTLCEIFKHAFDAKVMSMEEYDIVHLEHETLVLVVTSTFGNGDPPENGEKFGCALMEMRNPNSVHEERKYPEPLRFFPRKGPPLSRGDTEVHGLAAVRDSQLRSYKVRFNSVSSYSDSRKSSGDGPDLRDNFESTGPLANVRFSVFGLGSRAYPHFCAFGHAVDTLLEELGGERILKMREGDELCGQEEAFRTWAKKVFKAACDVFCVGDDVNIEKANNSLISNDRSWKRNKFRLTYVAEAPELTQGLSNVHKKRVSAARLLSRQNLQSPKSSRSTIFVRLHTNGNQELQYQPGDHLGVFPGNHEDLVNALIERLEDAPPANQLVKVELLEERNTALGVISNWTDEHRLPPCTIFQAFKYYLDITTPPTPLQLQQFASLATSEKERQRLLVLSKGLQEYEEWKWGKNPTIVEVLEEFPSIQMPSTLLLTQLSLLQPRYYSISSSPDMYPDEVHLTVAIVSYRTRDGEGPIHHGVCSSWLNRIQADEVVPCFVRGAPSFHLPQNPQVPCILVGPGTGIAPFRSFWQQRQFDIQHKGMSPCPMVLVFGCRQSKIDHIYREEALQAKSKGVFRELYTAYSREPDKPKKYVQDILQEQLAEPVYRALKEQGGHIYVCGDVTMAADVLKAIQRIMTQKGKLSVEDAGVFISRLRDDNRYHEDIFGVTLRTYEVTNRLRSESIAFIEESKKDTDEVFSS</sequence>
<name>NOS1_SHEEP</name>
<gene>
    <name type="primary">NOS1</name>
</gene>
<protein>
    <recommendedName>
        <fullName evidence="9">Nitric oxide synthase 1</fullName>
        <ecNumber evidence="2">1.14.13.39</ecNumber>
    </recommendedName>
    <alternativeName>
        <fullName>Constitutive NOS</fullName>
    </alternativeName>
    <alternativeName>
        <fullName>NC-NOS</fullName>
    </alternativeName>
    <alternativeName>
        <fullName>NOS type I</fullName>
    </alternativeName>
    <alternativeName>
        <fullName>Neuronal NOS</fullName>
        <shortName>N-NOS</shortName>
        <shortName>NNOS</shortName>
    </alternativeName>
    <alternativeName>
        <fullName evidence="9">Nitric oxide synthase, brain</fullName>
        <shortName evidence="9">bNOS</shortName>
    </alternativeName>
    <alternativeName>
        <fullName>Peptidyl-cysteine S-nitrosylase NOS1</fullName>
    </alternativeName>
</protein>